<dbReference type="EC" id="3.5.4.4" evidence="1"/>
<dbReference type="EMBL" id="CP001144">
    <property type="protein sequence ID" value="ACH75019.1"/>
    <property type="molecule type" value="Genomic_DNA"/>
</dbReference>
<dbReference type="RefSeq" id="WP_000565572.1">
    <property type="nucleotide sequence ID" value="NC_011205.1"/>
</dbReference>
<dbReference type="SMR" id="B5FIE1"/>
<dbReference type="KEGG" id="sed:SeD_A1879"/>
<dbReference type="HOGENOM" id="CLU_039228_0_2_6"/>
<dbReference type="Proteomes" id="UP000008322">
    <property type="component" value="Chromosome"/>
</dbReference>
<dbReference type="GO" id="GO:0005829">
    <property type="term" value="C:cytosol"/>
    <property type="evidence" value="ECO:0007669"/>
    <property type="project" value="TreeGrafter"/>
</dbReference>
<dbReference type="GO" id="GO:0046936">
    <property type="term" value="F:2'-deoxyadenosine deaminase activity"/>
    <property type="evidence" value="ECO:0007669"/>
    <property type="project" value="RHEA"/>
</dbReference>
<dbReference type="GO" id="GO:0004000">
    <property type="term" value="F:adenosine deaminase activity"/>
    <property type="evidence" value="ECO:0007669"/>
    <property type="project" value="UniProtKB-UniRule"/>
</dbReference>
<dbReference type="GO" id="GO:0008270">
    <property type="term" value="F:zinc ion binding"/>
    <property type="evidence" value="ECO:0007669"/>
    <property type="project" value="UniProtKB-UniRule"/>
</dbReference>
<dbReference type="GO" id="GO:0006154">
    <property type="term" value="P:adenosine catabolic process"/>
    <property type="evidence" value="ECO:0007669"/>
    <property type="project" value="TreeGrafter"/>
</dbReference>
<dbReference type="GO" id="GO:0043103">
    <property type="term" value="P:hypoxanthine salvage"/>
    <property type="evidence" value="ECO:0007669"/>
    <property type="project" value="TreeGrafter"/>
</dbReference>
<dbReference type="GO" id="GO:0046103">
    <property type="term" value="P:inosine biosynthetic process"/>
    <property type="evidence" value="ECO:0007669"/>
    <property type="project" value="TreeGrafter"/>
</dbReference>
<dbReference type="GO" id="GO:0009117">
    <property type="term" value="P:nucleotide metabolic process"/>
    <property type="evidence" value="ECO:0007669"/>
    <property type="project" value="UniProtKB-KW"/>
</dbReference>
<dbReference type="GO" id="GO:0009168">
    <property type="term" value="P:purine ribonucleoside monophosphate biosynthetic process"/>
    <property type="evidence" value="ECO:0007669"/>
    <property type="project" value="UniProtKB-UniRule"/>
</dbReference>
<dbReference type="CDD" id="cd01320">
    <property type="entry name" value="ADA"/>
    <property type="match status" value="1"/>
</dbReference>
<dbReference type="FunFam" id="3.20.20.140:FF:000009">
    <property type="entry name" value="Adenosine deaminase"/>
    <property type="match status" value="1"/>
</dbReference>
<dbReference type="Gene3D" id="3.20.20.140">
    <property type="entry name" value="Metal-dependent hydrolases"/>
    <property type="match status" value="1"/>
</dbReference>
<dbReference type="HAMAP" id="MF_00540">
    <property type="entry name" value="A_deaminase"/>
    <property type="match status" value="1"/>
</dbReference>
<dbReference type="InterPro" id="IPR006650">
    <property type="entry name" value="A/AMP_deam_AS"/>
</dbReference>
<dbReference type="InterPro" id="IPR028893">
    <property type="entry name" value="A_deaminase"/>
</dbReference>
<dbReference type="InterPro" id="IPR001365">
    <property type="entry name" value="A_deaminase_dom"/>
</dbReference>
<dbReference type="InterPro" id="IPR006330">
    <property type="entry name" value="Ado/ade_deaminase"/>
</dbReference>
<dbReference type="InterPro" id="IPR032466">
    <property type="entry name" value="Metal_Hydrolase"/>
</dbReference>
<dbReference type="NCBIfam" id="TIGR01430">
    <property type="entry name" value="aden_deam"/>
    <property type="match status" value="1"/>
</dbReference>
<dbReference type="NCBIfam" id="NF006846">
    <property type="entry name" value="PRK09358.1-1"/>
    <property type="match status" value="1"/>
</dbReference>
<dbReference type="PANTHER" id="PTHR11409">
    <property type="entry name" value="ADENOSINE DEAMINASE"/>
    <property type="match status" value="1"/>
</dbReference>
<dbReference type="PANTHER" id="PTHR11409:SF43">
    <property type="entry name" value="ADENOSINE DEAMINASE"/>
    <property type="match status" value="1"/>
</dbReference>
<dbReference type="Pfam" id="PF00962">
    <property type="entry name" value="A_deaminase"/>
    <property type="match status" value="1"/>
</dbReference>
<dbReference type="SUPFAM" id="SSF51556">
    <property type="entry name" value="Metallo-dependent hydrolases"/>
    <property type="match status" value="1"/>
</dbReference>
<dbReference type="PROSITE" id="PS00485">
    <property type="entry name" value="A_DEAMINASE"/>
    <property type="match status" value="1"/>
</dbReference>
<feature type="chain" id="PRO_1000128861" description="Adenosine deaminase">
    <location>
        <begin position="1"/>
        <end position="333"/>
    </location>
</feature>
<feature type="active site" description="Proton donor" evidence="1">
    <location>
        <position position="200"/>
    </location>
</feature>
<feature type="binding site" evidence="1">
    <location>
        <position position="12"/>
    </location>
    <ligand>
        <name>Zn(2+)</name>
        <dbReference type="ChEBI" id="CHEBI:29105"/>
        <note>catalytic</note>
    </ligand>
</feature>
<feature type="binding site" evidence="1">
    <location>
        <position position="14"/>
    </location>
    <ligand>
        <name>substrate</name>
    </ligand>
</feature>
<feature type="binding site" evidence="1">
    <location>
        <position position="14"/>
    </location>
    <ligand>
        <name>Zn(2+)</name>
        <dbReference type="ChEBI" id="CHEBI:29105"/>
        <note>catalytic</note>
    </ligand>
</feature>
<feature type="binding site" evidence="1">
    <location>
        <position position="16"/>
    </location>
    <ligand>
        <name>substrate</name>
    </ligand>
</feature>
<feature type="binding site" evidence="1">
    <location>
        <position position="170"/>
    </location>
    <ligand>
        <name>substrate</name>
    </ligand>
</feature>
<feature type="binding site" evidence="1">
    <location>
        <position position="197"/>
    </location>
    <ligand>
        <name>Zn(2+)</name>
        <dbReference type="ChEBI" id="CHEBI:29105"/>
        <note>catalytic</note>
    </ligand>
</feature>
<feature type="binding site" evidence="1">
    <location>
        <position position="278"/>
    </location>
    <ligand>
        <name>Zn(2+)</name>
        <dbReference type="ChEBI" id="CHEBI:29105"/>
        <note>catalytic</note>
    </ligand>
</feature>
<feature type="binding site" evidence="1">
    <location>
        <position position="279"/>
    </location>
    <ligand>
        <name>substrate</name>
    </ligand>
</feature>
<feature type="site" description="Important for catalytic activity" evidence="1">
    <location>
        <position position="221"/>
    </location>
</feature>
<protein>
    <recommendedName>
        <fullName evidence="1">Adenosine deaminase</fullName>
        <ecNumber evidence="1">3.5.4.4</ecNumber>
    </recommendedName>
    <alternativeName>
        <fullName evidence="1">Adenosine aminohydrolase</fullName>
    </alternativeName>
</protein>
<organism>
    <name type="scientific">Salmonella dublin (strain CT_02021853)</name>
    <dbReference type="NCBI Taxonomy" id="439851"/>
    <lineage>
        <taxon>Bacteria</taxon>
        <taxon>Pseudomonadati</taxon>
        <taxon>Pseudomonadota</taxon>
        <taxon>Gammaproteobacteria</taxon>
        <taxon>Enterobacterales</taxon>
        <taxon>Enterobacteriaceae</taxon>
        <taxon>Salmonella</taxon>
    </lineage>
</organism>
<accession>B5FIE1</accession>
<sequence>MIDITLPLTDIHRHLDGNIRAQTILDLGRQFNIALPAQTLETLIPHVQVTSTEPDLVSFLTKLDWGVKVLASLDACRRVAFENIEDAARNGLHYVELRFSPGYMAMAHQLPIAGVVEAVIDGVRDGCNTFGVEARLIGIMSRTFGEAACLQELDALLAHRENITALDLAGDELGFPGSLFLSHFNRARDAGWHITVHAGEAAGPESIWQAIRELGAERIGHGVKAVEDRTLMDFLAQQRIGIESCLTSNIQTSTVASLADHPLKTFLEHGVLASLNTDDPAVQGVDIIHEYHVAAPAAGLSREQIRQAQINGLEIAFLSDGEKRALREKVAAA</sequence>
<gene>
    <name evidence="1" type="primary">add</name>
    <name type="ordered locus">SeD_A1879</name>
</gene>
<evidence type="ECO:0000255" key="1">
    <source>
        <dbReference type="HAMAP-Rule" id="MF_00540"/>
    </source>
</evidence>
<reference key="1">
    <citation type="journal article" date="2011" name="J. Bacteriol.">
        <title>Comparative genomics of 28 Salmonella enterica isolates: evidence for CRISPR-mediated adaptive sublineage evolution.</title>
        <authorList>
            <person name="Fricke W.F."/>
            <person name="Mammel M.K."/>
            <person name="McDermott P.F."/>
            <person name="Tartera C."/>
            <person name="White D.G."/>
            <person name="Leclerc J.E."/>
            <person name="Ravel J."/>
            <person name="Cebula T.A."/>
        </authorList>
    </citation>
    <scope>NUCLEOTIDE SEQUENCE [LARGE SCALE GENOMIC DNA]</scope>
    <source>
        <strain>CT_02021853</strain>
    </source>
</reference>
<proteinExistence type="inferred from homology"/>
<name>ADD_SALDC</name>
<keyword id="KW-0378">Hydrolase</keyword>
<keyword id="KW-0479">Metal-binding</keyword>
<keyword id="KW-0546">Nucleotide metabolism</keyword>
<keyword id="KW-0862">Zinc</keyword>
<comment type="function">
    <text evidence="1">Catalyzes the hydrolytic deamination of adenosine and 2-deoxyadenosine.</text>
</comment>
<comment type="catalytic activity">
    <reaction evidence="1">
        <text>adenosine + H2O + H(+) = inosine + NH4(+)</text>
        <dbReference type="Rhea" id="RHEA:24408"/>
        <dbReference type="ChEBI" id="CHEBI:15377"/>
        <dbReference type="ChEBI" id="CHEBI:15378"/>
        <dbReference type="ChEBI" id="CHEBI:16335"/>
        <dbReference type="ChEBI" id="CHEBI:17596"/>
        <dbReference type="ChEBI" id="CHEBI:28938"/>
        <dbReference type="EC" id="3.5.4.4"/>
    </reaction>
    <physiologicalReaction direction="left-to-right" evidence="1">
        <dbReference type="Rhea" id="RHEA:24409"/>
    </physiologicalReaction>
</comment>
<comment type="catalytic activity">
    <reaction evidence="1">
        <text>2'-deoxyadenosine + H2O + H(+) = 2'-deoxyinosine + NH4(+)</text>
        <dbReference type="Rhea" id="RHEA:28190"/>
        <dbReference type="ChEBI" id="CHEBI:15377"/>
        <dbReference type="ChEBI" id="CHEBI:15378"/>
        <dbReference type="ChEBI" id="CHEBI:17256"/>
        <dbReference type="ChEBI" id="CHEBI:28938"/>
        <dbReference type="ChEBI" id="CHEBI:28997"/>
        <dbReference type="EC" id="3.5.4.4"/>
    </reaction>
    <physiologicalReaction direction="left-to-right" evidence="1">
        <dbReference type="Rhea" id="RHEA:28191"/>
    </physiologicalReaction>
</comment>
<comment type="cofactor">
    <cofactor evidence="1">
        <name>Zn(2+)</name>
        <dbReference type="ChEBI" id="CHEBI:29105"/>
    </cofactor>
    <text evidence="1">Binds 1 zinc ion per subunit.</text>
</comment>
<comment type="similarity">
    <text evidence="1">Belongs to the metallo-dependent hydrolases superfamily. Adenosine and AMP deaminases family. Adenosine deaminase subfamily.</text>
</comment>